<proteinExistence type="inferred from homology"/>
<comment type="function">
    <text evidence="1">Usually encoded in the trnK tRNA gene intron. Probably assists in splicing its own and other chloroplast group II introns.</text>
</comment>
<comment type="subcellular location">
    <subcellularLocation>
        <location>Plastid</location>
        <location>Chloroplast</location>
    </subcellularLocation>
</comment>
<comment type="similarity">
    <text evidence="1">Belongs to the intron maturase 2 family. MatK subfamily.</text>
</comment>
<protein>
    <recommendedName>
        <fullName evidence="1">Maturase K</fullName>
    </recommendedName>
    <alternativeName>
        <fullName evidence="1">Intron maturase</fullName>
    </alternativeName>
</protein>
<sequence length="509" mass="60914">MDEFQRNSNKHRSWQQFFLYPLFFREDLYAIAHYHHLDRSGSSEPTEILVSNFLSFLTVKRSIRRIRKQNNSISLLGNSDSNKLIEYNKNSSFQLILEGFTIXLEVXXXXRSKHFIKXMDGWNSXRSIHCIXXFMEAKLPHSNYISDLRVPYSIHPEILVRIFRRWIRDVPSLHLLRSILHEWKNSFNRENLQKALITQRENTRFSLFLWNSYVYECESFLIPLIKRILNSQSLLYGSFPDRTHFEKKIKDIVIFPPHKISTKKIWLLKDSFIHYVRYGERSLIALKGTHLQVKKCRYHLFHFWQYYFHLWFQPYRICSLELSKTSFSFLGFFMHVKMRPLVVRAKMLDDLFITDLITNELNSTAPIRSILFSLAKEKFCDISGWPISKLSWTSLSDDDILDRFDRIWINLFHYYSGSINQDGLYHIKYILLLSCAKTLACKHKSTIRVIREQLGSELFTKSFSKEREFISSSSSKTRLQRERIWNLEIXQINPLANFWQKMQNKQIKN</sequence>
<dbReference type="EMBL" id="AF152183">
    <property type="protein sequence ID" value="AAF25736.1"/>
    <property type="molecule type" value="Genomic_DNA"/>
</dbReference>
<dbReference type="GO" id="GO:0009507">
    <property type="term" value="C:chloroplast"/>
    <property type="evidence" value="ECO:0007669"/>
    <property type="project" value="UniProtKB-SubCell"/>
</dbReference>
<dbReference type="GO" id="GO:0003723">
    <property type="term" value="F:RNA binding"/>
    <property type="evidence" value="ECO:0007669"/>
    <property type="project" value="UniProtKB-KW"/>
</dbReference>
<dbReference type="GO" id="GO:0006397">
    <property type="term" value="P:mRNA processing"/>
    <property type="evidence" value="ECO:0007669"/>
    <property type="project" value="UniProtKB-KW"/>
</dbReference>
<dbReference type="GO" id="GO:0008380">
    <property type="term" value="P:RNA splicing"/>
    <property type="evidence" value="ECO:0007669"/>
    <property type="project" value="UniProtKB-UniRule"/>
</dbReference>
<dbReference type="GO" id="GO:0008033">
    <property type="term" value="P:tRNA processing"/>
    <property type="evidence" value="ECO:0007669"/>
    <property type="project" value="UniProtKB-KW"/>
</dbReference>
<dbReference type="HAMAP" id="MF_01390">
    <property type="entry name" value="MatK"/>
    <property type="match status" value="1"/>
</dbReference>
<dbReference type="InterPro" id="IPR024937">
    <property type="entry name" value="Domain_X"/>
</dbReference>
<dbReference type="InterPro" id="IPR002866">
    <property type="entry name" value="Maturase_MatK"/>
</dbReference>
<dbReference type="InterPro" id="IPR024942">
    <property type="entry name" value="Maturase_MatK_N"/>
</dbReference>
<dbReference type="PANTHER" id="PTHR34811">
    <property type="entry name" value="MATURASE K"/>
    <property type="match status" value="1"/>
</dbReference>
<dbReference type="PANTHER" id="PTHR34811:SF1">
    <property type="entry name" value="MATURASE K"/>
    <property type="match status" value="1"/>
</dbReference>
<dbReference type="Pfam" id="PF01348">
    <property type="entry name" value="Intron_maturas2"/>
    <property type="match status" value="1"/>
</dbReference>
<dbReference type="Pfam" id="PF01824">
    <property type="entry name" value="MatK_N"/>
    <property type="match status" value="1"/>
</dbReference>
<evidence type="ECO:0000255" key="1">
    <source>
        <dbReference type="HAMAP-Rule" id="MF_01390"/>
    </source>
</evidence>
<name>MATK_CHAOB</name>
<feature type="chain" id="PRO_0000143326" description="Maturase K">
    <location>
        <begin position="1"/>
        <end position="509"/>
    </location>
</feature>
<gene>
    <name evidence="1" type="primary">matK</name>
</gene>
<keyword id="KW-0150">Chloroplast</keyword>
<keyword id="KW-0507">mRNA processing</keyword>
<keyword id="KW-0934">Plastid</keyword>
<keyword id="KW-0694">RNA-binding</keyword>
<keyword id="KW-0819">tRNA processing</keyword>
<geneLocation type="chloroplast"/>
<reference key="1">
    <citation type="journal article" date="2000" name="Am. J. Bot.">
        <title>Relationships within Cupressaceae sensu lato: a combined morphological and molecular approach.</title>
        <authorList>
            <person name="Gadek P.A."/>
            <person name="Alpers D.L."/>
            <person name="Heslewood M.M."/>
            <person name="Quinn C.J."/>
        </authorList>
    </citation>
    <scope>NUCLEOTIDE SEQUENCE [GENOMIC DNA]</scope>
</reference>
<organism>
    <name type="scientific">Chamaecyparis obtusa</name>
    <name type="common">Hinoki false-cypress</name>
    <name type="synonym">Retinospora obtusa</name>
    <dbReference type="NCBI Taxonomy" id="13415"/>
    <lineage>
        <taxon>Eukaryota</taxon>
        <taxon>Viridiplantae</taxon>
        <taxon>Streptophyta</taxon>
        <taxon>Embryophyta</taxon>
        <taxon>Tracheophyta</taxon>
        <taxon>Spermatophyta</taxon>
        <taxon>Pinopsida</taxon>
        <taxon>Pinidae</taxon>
        <taxon>Conifers II</taxon>
        <taxon>Cupressales</taxon>
        <taxon>Cupressaceae</taxon>
        <taxon>Chamaecyparis</taxon>
    </lineage>
</organism>
<accession>Q9MSV4</accession>